<dbReference type="EC" id="4.6.1.12" evidence="1"/>
<dbReference type="EMBL" id="CP000360">
    <property type="protein sequence ID" value="ABF39192.1"/>
    <property type="molecule type" value="Genomic_DNA"/>
</dbReference>
<dbReference type="RefSeq" id="WP_011520994.1">
    <property type="nucleotide sequence ID" value="NC_008009.1"/>
</dbReference>
<dbReference type="SMR" id="Q1IVA8"/>
<dbReference type="STRING" id="204669.Acid345_0187"/>
<dbReference type="EnsemblBacteria" id="ABF39192">
    <property type="protein sequence ID" value="ABF39192"/>
    <property type="gene ID" value="Acid345_0187"/>
</dbReference>
<dbReference type="KEGG" id="aba:Acid345_0187"/>
<dbReference type="eggNOG" id="COG0245">
    <property type="taxonomic scope" value="Bacteria"/>
</dbReference>
<dbReference type="HOGENOM" id="CLU_084630_2_0_0"/>
<dbReference type="OrthoDB" id="9806837at2"/>
<dbReference type="UniPathway" id="UPA00056">
    <property type="reaction ID" value="UER00095"/>
</dbReference>
<dbReference type="Proteomes" id="UP000002432">
    <property type="component" value="Chromosome"/>
</dbReference>
<dbReference type="GO" id="GO:0008685">
    <property type="term" value="F:2-C-methyl-D-erythritol 2,4-cyclodiphosphate synthase activity"/>
    <property type="evidence" value="ECO:0007669"/>
    <property type="project" value="UniProtKB-UniRule"/>
</dbReference>
<dbReference type="GO" id="GO:0046872">
    <property type="term" value="F:metal ion binding"/>
    <property type="evidence" value="ECO:0007669"/>
    <property type="project" value="UniProtKB-KW"/>
</dbReference>
<dbReference type="GO" id="GO:0019288">
    <property type="term" value="P:isopentenyl diphosphate biosynthetic process, methylerythritol 4-phosphate pathway"/>
    <property type="evidence" value="ECO:0007669"/>
    <property type="project" value="UniProtKB-UniRule"/>
</dbReference>
<dbReference type="GO" id="GO:0016114">
    <property type="term" value="P:terpenoid biosynthetic process"/>
    <property type="evidence" value="ECO:0007669"/>
    <property type="project" value="InterPro"/>
</dbReference>
<dbReference type="CDD" id="cd00554">
    <property type="entry name" value="MECDP_synthase"/>
    <property type="match status" value="1"/>
</dbReference>
<dbReference type="Gene3D" id="3.30.1330.50">
    <property type="entry name" value="2-C-methyl-D-erythritol 2,4-cyclodiphosphate synthase"/>
    <property type="match status" value="1"/>
</dbReference>
<dbReference type="HAMAP" id="MF_00107">
    <property type="entry name" value="IspF"/>
    <property type="match status" value="1"/>
</dbReference>
<dbReference type="InterPro" id="IPR003526">
    <property type="entry name" value="MECDP_synthase"/>
</dbReference>
<dbReference type="InterPro" id="IPR020555">
    <property type="entry name" value="MECDP_synthase_CS"/>
</dbReference>
<dbReference type="InterPro" id="IPR036571">
    <property type="entry name" value="MECDP_synthase_sf"/>
</dbReference>
<dbReference type="NCBIfam" id="TIGR00151">
    <property type="entry name" value="ispF"/>
    <property type="match status" value="1"/>
</dbReference>
<dbReference type="PANTHER" id="PTHR43181">
    <property type="entry name" value="2-C-METHYL-D-ERYTHRITOL 2,4-CYCLODIPHOSPHATE SYNTHASE, CHLOROPLASTIC"/>
    <property type="match status" value="1"/>
</dbReference>
<dbReference type="PANTHER" id="PTHR43181:SF1">
    <property type="entry name" value="2-C-METHYL-D-ERYTHRITOL 2,4-CYCLODIPHOSPHATE SYNTHASE, CHLOROPLASTIC"/>
    <property type="match status" value="1"/>
</dbReference>
<dbReference type="Pfam" id="PF02542">
    <property type="entry name" value="YgbB"/>
    <property type="match status" value="1"/>
</dbReference>
<dbReference type="SUPFAM" id="SSF69765">
    <property type="entry name" value="IpsF-like"/>
    <property type="match status" value="1"/>
</dbReference>
<dbReference type="PROSITE" id="PS01350">
    <property type="entry name" value="ISPF"/>
    <property type="match status" value="1"/>
</dbReference>
<evidence type="ECO:0000255" key="1">
    <source>
        <dbReference type="HAMAP-Rule" id="MF_00107"/>
    </source>
</evidence>
<name>ISPF_KORVE</name>
<accession>Q1IVA8</accession>
<proteinExistence type="inferred from homology"/>
<protein>
    <recommendedName>
        <fullName evidence="1">2-C-methyl-D-erythritol 2,4-cyclodiphosphate synthase</fullName>
        <shortName evidence="1">MECDP-synthase</shortName>
        <shortName evidence="1">MECPP-synthase</shortName>
        <shortName evidence="1">MECPS</shortName>
        <ecNumber evidence="1">4.6.1.12</ecNumber>
    </recommendedName>
</protein>
<keyword id="KW-0414">Isoprene biosynthesis</keyword>
<keyword id="KW-0456">Lyase</keyword>
<keyword id="KW-0479">Metal-binding</keyword>
<keyword id="KW-1185">Reference proteome</keyword>
<reference key="1">
    <citation type="journal article" date="2009" name="Appl. Environ. Microbiol.">
        <title>Three genomes from the phylum Acidobacteria provide insight into the lifestyles of these microorganisms in soils.</title>
        <authorList>
            <person name="Ward N.L."/>
            <person name="Challacombe J.F."/>
            <person name="Janssen P.H."/>
            <person name="Henrissat B."/>
            <person name="Coutinho P.M."/>
            <person name="Wu M."/>
            <person name="Xie G."/>
            <person name="Haft D.H."/>
            <person name="Sait M."/>
            <person name="Badger J."/>
            <person name="Barabote R.D."/>
            <person name="Bradley B."/>
            <person name="Brettin T.S."/>
            <person name="Brinkac L.M."/>
            <person name="Bruce D."/>
            <person name="Creasy T."/>
            <person name="Daugherty S.C."/>
            <person name="Davidsen T.M."/>
            <person name="DeBoy R.T."/>
            <person name="Detter J.C."/>
            <person name="Dodson R.J."/>
            <person name="Durkin A.S."/>
            <person name="Ganapathy A."/>
            <person name="Gwinn-Giglio M."/>
            <person name="Han C.S."/>
            <person name="Khouri H."/>
            <person name="Kiss H."/>
            <person name="Kothari S.P."/>
            <person name="Madupu R."/>
            <person name="Nelson K.E."/>
            <person name="Nelson W.C."/>
            <person name="Paulsen I."/>
            <person name="Penn K."/>
            <person name="Ren Q."/>
            <person name="Rosovitz M.J."/>
            <person name="Selengut J.D."/>
            <person name="Shrivastava S."/>
            <person name="Sullivan S.A."/>
            <person name="Tapia R."/>
            <person name="Thompson L.S."/>
            <person name="Watkins K.L."/>
            <person name="Yang Q."/>
            <person name="Yu C."/>
            <person name="Zafar N."/>
            <person name="Zhou L."/>
            <person name="Kuske C.R."/>
        </authorList>
    </citation>
    <scope>NUCLEOTIDE SEQUENCE [LARGE SCALE GENOMIC DNA]</scope>
    <source>
        <strain>Ellin345</strain>
    </source>
</reference>
<gene>
    <name evidence="1" type="primary">ispF</name>
    <name type="ordered locus">Acid345_0187</name>
</gene>
<organism>
    <name type="scientific">Koribacter versatilis (strain Ellin345)</name>
    <dbReference type="NCBI Taxonomy" id="204669"/>
    <lineage>
        <taxon>Bacteria</taxon>
        <taxon>Pseudomonadati</taxon>
        <taxon>Acidobacteriota</taxon>
        <taxon>Terriglobia</taxon>
        <taxon>Terriglobales</taxon>
        <taxon>Candidatus Korobacteraceae</taxon>
        <taxon>Candidatus Korobacter</taxon>
    </lineage>
</organism>
<feature type="chain" id="PRO_1000118987" description="2-C-methyl-D-erythritol 2,4-cyclodiphosphate synthase">
    <location>
        <begin position="1"/>
        <end position="155"/>
    </location>
</feature>
<feature type="binding site" evidence="1">
    <location>
        <begin position="9"/>
        <end position="11"/>
    </location>
    <ligand>
        <name>4-CDP-2-C-methyl-D-erythritol 2-phosphate</name>
        <dbReference type="ChEBI" id="CHEBI:57919"/>
    </ligand>
</feature>
<feature type="binding site" evidence="1">
    <location>
        <position position="9"/>
    </location>
    <ligand>
        <name>a divalent metal cation</name>
        <dbReference type="ChEBI" id="CHEBI:60240"/>
    </ligand>
</feature>
<feature type="binding site" evidence="1">
    <location>
        <position position="11"/>
    </location>
    <ligand>
        <name>a divalent metal cation</name>
        <dbReference type="ChEBI" id="CHEBI:60240"/>
    </ligand>
</feature>
<feature type="binding site" evidence="1">
    <location>
        <begin position="35"/>
        <end position="36"/>
    </location>
    <ligand>
        <name>4-CDP-2-C-methyl-D-erythritol 2-phosphate</name>
        <dbReference type="ChEBI" id="CHEBI:57919"/>
    </ligand>
</feature>
<feature type="binding site" evidence="1">
    <location>
        <position position="43"/>
    </location>
    <ligand>
        <name>a divalent metal cation</name>
        <dbReference type="ChEBI" id="CHEBI:60240"/>
    </ligand>
</feature>
<feature type="binding site" evidence="1">
    <location>
        <begin position="57"/>
        <end position="59"/>
    </location>
    <ligand>
        <name>4-CDP-2-C-methyl-D-erythritol 2-phosphate</name>
        <dbReference type="ChEBI" id="CHEBI:57919"/>
    </ligand>
</feature>
<feature type="site" description="Transition state stabilizer" evidence="1">
    <location>
        <position position="35"/>
    </location>
</feature>
<feature type="site" description="Transition state stabilizer" evidence="1">
    <location>
        <position position="134"/>
    </location>
</feature>
<sequence>MIRVGLGFDSHEFREGIPLRIGGLTIPHTHGLSGHSDGDVLLHAITDALLGAVAAGDIGAFFPPSDPKWKGANSVVFIEEAMRHIETAGYRVGNVDCSLVLNAPKIGPHAKAIQESVAKLLKIEPTAVGIKAKTPEGLNLDGTALAHVVVLLEKR</sequence>
<comment type="function">
    <text evidence="1">Involved in the biosynthesis of isopentenyl diphosphate (IPP) and dimethylallyl diphosphate (DMAPP), two major building blocks of isoprenoid compounds. Catalyzes the conversion of 4-diphosphocytidyl-2-C-methyl-D-erythritol 2-phosphate (CDP-ME2P) to 2-C-methyl-D-erythritol 2,4-cyclodiphosphate (ME-CPP) with a corresponding release of cytidine 5-monophosphate (CMP).</text>
</comment>
<comment type="catalytic activity">
    <reaction evidence="1">
        <text>4-CDP-2-C-methyl-D-erythritol 2-phosphate = 2-C-methyl-D-erythritol 2,4-cyclic diphosphate + CMP</text>
        <dbReference type="Rhea" id="RHEA:23864"/>
        <dbReference type="ChEBI" id="CHEBI:57919"/>
        <dbReference type="ChEBI" id="CHEBI:58483"/>
        <dbReference type="ChEBI" id="CHEBI:60377"/>
        <dbReference type="EC" id="4.6.1.12"/>
    </reaction>
</comment>
<comment type="cofactor">
    <cofactor evidence="1">
        <name>a divalent metal cation</name>
        <dbReference type="ChEBI" id="CHEBI:60240"/>
    </cofactor>
    <text evidence="1">Binds 1 divalent metal cation per subunit.</text>
</comment>
<comment type="pathway">
    <text evidence="1">Isoprenoid biosynthesis; isopentenyl diphosphate biosynthesis via DXP pathway; isopentenyl diphosphate from 1-deoxy-D-xylulose 5-phosphate: step 4/6.</text>
</comment>
<comment type="subunit">
    <text evidence="1">Homotrimer.</text>
</comment>
<comment type="similarity">
    <text evidence="1">Belongs to the IspF family.</text>
</comment>